<keyword id="KW-0687">Ribonucleoprotein</keyword>
<keyword id="KW-0689">Ribosomal protein</keyword>
<keyword id="KW-0694">RNA-binding</keyword>
<keyword id="KW-0699">rRNA-binding</keyword>
<dbReference type="EMBL" id="CP000920">
    <property type="protein sequence ID" value="ACO21454.1"/>
    <property type="molecule type" value="Genomic_DNA"/>
</dbReference>
<dbReference type="RefSeq" id="WP_000497691.1">
    <property type="nucleotide sequence ID" value="NC_012467.1"/>
</dbReference>
<dbReference type="SMR" id="C1CIA8"/>
<dbReference type="GeneID" id="93738968"/>
<dbReference type="KEGG" id="spp:SPP_0271"/>
<dbReference type="HOGENOM" id="CLU_093315_2_0_9"/>
<dbReference type="GO" id="GO:1990904">
    <property type="term" value="C:ribonucleoprotein complex"/>
    <property type="evidence" value="ECO:0007669"/>
    <property type="project" value="UniProtKB-KW"/>
</dbReference>
<dbReference type="GO" id="GO:0005840">
    <property type="term" value="C:ribosome"/>
    <property type="evidence" value="ECO:0007669"/>
    <property type="project" value="UniProtKB-KW"/>
</dbReference>
<dbReference type="GO" id="GO:0019843">
    <property type="term" value="F:rRNA binding"/>
    <property type="evidence" value="ECO:0007669"/>
    <property type="project" value="UniProtKB-UniRule"/>
</dbReference>
<dbReference type="GO" id="GO:0003735">
    <property type="term" value="F:structural constituent of ribosome"/>
    <property type="evidence" value="ECO:0007669"/>
    <property type="project" value="InterPro"/>
</dbReference>
<dbReference type="GO" id="GO:0006412">
    <property type="term" value="P:translation"/>
    <property type="evidence" value="ECO:0007669"/>
    <property type="project" value="UniProtKB-UniRule"/>
</dbReference>
<dbReference type="CDD" id="cd06089">
    <property type="entry name" value="KOW_RPL26"/>
    <property type="match status" value="1"/>
</dbReference>
<dbReference type="FunFam" id="2.30.30.30:FF:000004">
    <property type="entry name" value="50S ribosomal protein L24"/>
    <property type="match status" value="1"/>
</dbReference>
<dbReference type="Gene3D" id="2.30.30.30">
    <property type="match status" value="1"/>
</dbReference>
<dbReference type="HAMAP" id="MF_01326_B">
    <property type="entry name" value="Ribosomal_uL24_B"/>
    <property type="match status" value="1"/>
</dbReference>
<dbReference type="InterPro" id="IPR005824">
    <property type="entry name" value="KOW"/>
</dbReference>
<dbReference type="InterPro" id="IPR014722">
    <property type="entry name" value="Rib_uL2_dom2"/>
</dbReference>
<dbReference type="InterPro" id="IPR003256">
    <property type="entry name" value="Ribosomal_uL24"/>
</dbReference>
<dbReference type="InterPro" id="IPR005825">
    <property type="entry name" value="Ribosomal_uL24_CS"/>
</dbReference>
<dbReference type="InterPro" id="IPR041988">
    <property type="entry name" value="Ribosomal_uL24_KOW"/>
</dbReference>
<dbReference type="InterPro" id="IPR008991">
    <property type="entry name" value="Translation_prot_SH3-like_sf"/>
</dbReference>
<dbReference type="NCBIfam" id="TIGR01079">
    <property type="entry name" value="rplX_bact"/>
    <property type="match status" value="1"/>
</dbReference>
<dbReference type="PANTHER" id="PTHR12903">
    <property type="entry name" value="MITOCHONDRIAL RIBOSOMAL PROTEIN L24"/>
    <property type="match status" value="1"/>
</dbReference>
<dbReference type="Pfam" id="PF00467">
    <property type="entry name" value="KOW"/>
    <property type="match status" value="1"/>
</dbReference>
<dbReference type="Pfam" id="PF17136">
    <property type="entry name" value="ribosomal_L24"/>
    <property type="match status" value="1"/>
</dbReference>
<dbReference type="SMART" id="SM00739">
    <property type="entry name" value="KOW"/>
    <property type="match status" value="1"/>
</dbReference>
<dbReference type="SUPFAM" id="SSF50104">
    <property type="entry name" value="Translation proteins SH3-like domain"/>
    <property type="match status" value="1"/>
</dbReference>
<dbReference type="PROSITE" id="PS01108">
    <property type="entry name" value="RIBOSOMAL_L24"/>
    <property type="match status" value="1"/>
</dbReference>
<reference key="1">
    <citation type="journal article" date="2010" name="Genome Biol.">
        <title>Structure and dynamics of the pan-genome of Streptococcus pneumoniae and closely related species.</title>
        <authorList>
            <person name="Donati C."/>
            <person name="Hiller N.L."/>
            <person name="Tettelin H."/>
            <person name="Muzzi A."/>
            <person name="Croucher N.J."/>
            <person name="Angiuoli S.V."/>
            <person name="Oggioni M."/>
            <person name="Dunning Hotopp J.C."/>
            <person name="Hu F.Z."/>
            <person name="Riley D.R."/>
            <person name="Covacci A."/>
            <person name="Mitchell T.J."/>
            <person name="Bentley S.D."/>
            <person name="Kilian M."/>
            <person name="Ehrlich G.D."/>
            <person name="Rappuoli R."/>
            <person name="Moxon E.R."/>
            <person name="Masignani V."/>
        </authorList>
    </citation>
    <scope>NUCLEOTIDE SEQUENCE [LARGE SCALE GENOMIC DNA]</scope>
    <source>
        <strain>P1031</strain>
    </source>
</reference>
<protein>
    <recommendedName>
        <fullName evidence="1">Large ribosomal subunit protein uL24</fullName>
    </recommendedName>
    <alternativeName>
        <fullName evidence="2">50S ribosomal protein L24</fullName>
    </alternativeName>
</protein>
<sequence>MFVKKGDKVRVIAGKDKGTEAVVLTALPKVNKVIVEGVNIVKKHQRPTNELPQGGIIEKEAAIHVSNVQVLDKNGVAGRVGYKFVDGKKVRYNKKSGEVLD</sequence>
<name>RL24_STRZP</name>
<proteinExistence type="inferred from homology"/>
<accession>C1CIA8</accession>
<feature type="chain" id="PRO_1000165969" description="Large ribosomal subunit protein uL24">
    <location>
        <begin position="1"/>
        <end position="101"/>
    </location>
</feature>
<organism>
    <name type="scientific">Streptococcus pneumoniae (strain P1031)</name>
    <dbReference type="NCBI Taxonomy" id="488223"/>
    <lineage>
        <taxon>Bacteria</taxon>
        <taxon>Bacillati</taxon>
        <taxon>Bacillota</taxon>
        <taxon>Bacilli</taxon>
        <taxon>Lactobacillales</taxon>
        <taxon>Streptococcaceae</taxon>
        <taxon>Streptococcus</taxon>
    </lineage>
</organism>
<gene>
    <name evidence="1" type="primary">rplX</name>
    <name type="ordered locus">SPP_0271</name>
</gene>
<comment type="function">
    <text evidence="1">One of two assembly initiator proteins, it binds directly to the 5'-end of the 23S rRNA, where it nucleates assembly of the 50S subunit.</text>
</comment>
<comment type="function">
    <text evidence="1">One of the proteins that surrounds the polypeptide exit tunnel on the outside of the subunit.</text>
</comment>
<comment type="subunit">
    <text evidence="1">Part of the 50S ribosomal subunit.</text>
</comment>
<comment type="similarity">
    <text evidence="1">Belongs to the universal ribosomal protein uL24 family.</text>
</comment>
<evidence type="ECO:0000255" key="1">
    <source>
        <dbReference type="HAMAP-Rule" id="MF_01326"/>
    </source>
</evidence>
<evidence type="ECO:0000305" key="2"/>